<geneLocation type="mitochondrion"/>
<name>CYB_CORRA</name>
<organism>
    <name type="scientific">Corynorhinus rafinesquii</name>
    <name type="common">Rafinesque's big-eared bat</name>
    <name type="synonym">Plecotus rafinesquii</name>
    <dbReference type="NCBI Taxonomy" id="27674"/>
    <lineage>
        <taxon>Eukaryota</taxon>
        <taxon>Metazoa</taxon>
        <taxon>Chordata</taxon>
        <taxon>Craniata</taxon>
        <taxon>Vertebrata</taxon>
        <taxon>Euteleostomi</taxon>
        <taxon>Mammalia</taxon>
        <taxon>Eutheria</taxon>
        <taxon>Laurasiatheria</taxon>
        <taxon>Chiroptera</taxon>
        <taxon>Yangochiroptera</taxon>
        <taxon>Vespertilionidae</taxon>
        <taxon>Corynorhinus</taxon>
    </lineage>
</organism>
<proteinExistence type="inferred from homology"/>
<sequence>MTNIRKSHPLLKIINDSFIDLPTPSNISSWWNFGSLLGICLVLQISTGLFLAMHYTSDTATAFNSVTHISRDVNYGWVLRYLHANGASMFFICLYLHVGRGLYYGSYLYKETWNVGVILLFATMATAFMGYVLPWGQMSFWGATVITNLLSAIPYIGTDLVEWIWGGFSVDKATLT</sequence>
<feature type="chain" id="PRO_0000061418" description="Cytochrome b">
    <location>
        <begin position="1"/>
        <end position="176" status="greater than"/>
    </location>
</feature>
<feature type="transmembrane region" description="Helical" evidence="2">
    <location>
        <begin position="33"/>
        <end position="53"/>
    </location>
</feature>
<feature type="transmembrane region" description="Helical" evidence="2">
    <location>
        <begin position="77"/>
        <end position="98"/>
    </location>
</feature>
<feature type="transmembrane region" description="Helical" evidence="2">
    <location>
        <begin position="113"/>
        <end position="133"/>
    </location>
</feature>
<feature type="binding site" description="axial binding residue" evidence="2">
    <location>
        <position position="83"/>
    </location>
    <ligand>
        <name>heme b</name>
        <dbReference type="ChEBI" id="CHEBI:60344"/>
        <label>b562</label>
    </ligand>
    <ligandPart>
        <name>Fe</name>
        <dbReference type="ChEBI" id="CHEBI:18248"/>
    </ligandPart>
</feature>
<feature type="binding site" description="axial binding residue" evidence="2">
    <location>
        <position position="97"/>
    </location>
    <ligand>
        <name>heme b</name>
        <dbReference type="ChEBI" id="CHEBI:60344"/>
        <label>b566</label>
    </ligand>
    <ligandPart>
        <name>Fe</name>
        <dbReference type="ChEBI" id="CHEBI:18248"/>
    </ligandPart>
</feature>
<feature type="non-terminal residue">
    <location>
        <position position="176"/>
    </location>
</feature>
<gene>
    <name type="primary">MT-CYB</name>
    <name type="synonym">COB</name>
    <name type="synonym">CYTB</name>
    <name type="synonym">MTCYB</name>
</gene>
<evidence type="ECO:0000250" key="1"/>
<evidence type="ECO:0000250" key="2">
    <source>
        <dbReference type="UniProtKB" id="P00157"/>
    </source>
</evidence>
<evidence type="ECO:0000255" key="3">
    <source>
        <dbReference type="PROSITE-ProRule" id="PRU00968"/>
    </source>
</evidence>
<dbReference type="EMBL" id="L19730">
    <property type="protein sequence ID" value="AAA17776.1"/>
    <property type="molecule type" value="Genomic_DNA"/>
</dbReference>
<dbReference type="SMR" id="Q36644"/>
<dbReference type="GO" id="GO:0005743">
    <property type="term" value="C:mitochondrial inner membrane"/>
    <property type="evidence" value="ECO:0007669"/>
    <property type="project" value="UniProtKB-SubCell"/>
</dbReference>
<dbReference type="GO" id="GO:0046872">
    <property type="term" value="F:metal ion binding"/>
    <property type="evidence" value="ECO:0007669"/>
    <property type="project" value="UniProtKB-KW"/>
</dbReference>
<dbReference type="GO" id="GO:0008121">
    <property type="term" value="F:ubiquinol-cytochrome-c reductase activity"/>
    <property type="evidence" value="ECO:0007669"/>
    <property type="project" value="TreeGrafter"/>
</dbReference>
<dbReference type="GO" id="GO:0006122">
    <property type="term" value="P:mitochondrial electron transport, ubiquinol to cytochrome c"/>
    <property type="evidence" value="ECO:0007669"/>
    <property type="project" value="TreeGrafter"/>
</dbReference>
<dbReference type="CDD" id="cd00284">
    <property type="entry name" value="Cytochrome_b_N"/>
    <property type="match status" value="1"/>
</dbReference>
<dbReference type="Gene3D" id="1.20.810.10">
    <property type="entry name" value="Cytochrome Bc1 Complex, Chain C"/>
    <property type="match status" value="1"/>
</dbReference>
<dbReference type="InterPro" id="IPR005797">
    <property type="entry name" value="Cyt_b/b6_N"/>
</dbReference>
<dbReference type="InterPro" id="IPR027387">
    <property type="entry name" value="Cytb/b6-like_sf"/>
</dbReference>
<dbReference type="InterPro" id="IPR048259">
    <property type="entry name" value="Cytochrome_b_N_euk/bac"/>
</dbReference>
<dbReference type="InterPro" id="IPR016174">
    <property type="entry name" value="Di-haem_cyt_TM"/>
</dbReference>
<dbReference type="PANTHER" id="PTHR19271">
    <property type="entry name" value="CYTOCHROME B"/>
    <property type="match status" value="1"/>
</dbReference>
<dbReference type="PANTHER" id="PTHR19271:SF16">
    <property type="entry name" value="CYTOCHROME B"/>
    <property type="match status" value="1"/>
</dbReference>
<dbReference type="Pfam" id="PF00033">
    <property type="entry name" value="Cytochrome_B"/>
    <property type="match status" value="1"/>
</dbReference>
<dbReference type="SUPFAM" id="SSF81342">
    <property type="entry name" value="Transmembrane di-heme cytochromes"/>
    <property type="match status" value="1"/>
</dbReference>
<dbReference type="PROSITE" id="PS51002">
    <property type="entry name" value="CYTB_NTER"/>
    <property type="match status" value="1"/>
</dbReference>
<accession>Q36644</accession>
<reference key="1">
    <citation type="journal article" date="1994" name="J. Mammal.">
        <title>Familial affinity of Tomopeas ravus (Chiroptera) based on protein electrophoretic and cytochrome b sequence data.</title>
        <authorList>
            <person name="Sudman P.D."/>
            <person name="Barkley L.J."/>
            <person name="Hafner M.S."/>
        </authorList>
    </citation>
    <scope>NUCLEOTIDE SEQUENCE [GENOMIC DNA]</scope>
    <source>
        <strain>Isolate LSUMZ 28462</strain>
        <tissue>Kidney</tissue>
        <tissue>Liver</tissue>
    </source>
</reference>
<keyword id="KW-0249">Electron transport</keyword>
<keyword id="KW-0349">Heme</keyword>
<keyword id="KW-0408">Iron</keyword>
<keyword id="KW-0472">Membrane</keyword>
<keyword id="KW-0479">Metal-binding</keyword>
<keyword id="KW-0496">Mitochondrion</keyword>
<keyword id="KW-0999">Mitochondrion inner membrane</keyword>
<keyword id="KW-0679">Respiratory chain</keyword>
<keyword id="KW-0812">Transmembrane</keyword>
<keyword id="KW-1133">Transmembrane helix</keyword>
<keyword id="KW-0813">Transport</keyword>
<keyword id="KW-0830">Ubiquinone</keyword>
<comment type="function">
    <text evidence="2">Component of the ubiquinol-cytochrome c reductase complex (complex III or cytochrome b-c1 complex) that is part of the mitochondrial respiratory chain. The b-c1 complex mediates electron transfer from ubiquinol to cytochrome c. Contributes to the generation of a proton gradient across the mitochondrial membrane that is then used for ATP synthesis.</text>
</comment>
<comment type="cofactor">
    <cofactor evidence="2">
        <name>heme b</name>
        <dbReference type="ChEBI" id="CHEBI:60344"/>
    </cofactor>
    <text evidence="2">Binds 2 heme b groups non-covalently.</text>
</comment>
<comment type="subunit">
    <text evidence="2">The cytochrome bc1 complex contains 11 subunits: 3 respiratory subunits (MT-CYB, CYC1 and UQCRFS1), 2 core proteins (UQCRC1 and UQCRC2) and 6 low-molecular weight proteins (UQCRH/QCR6, UQCRB/QCR7, UQCRQ/QCR8, UQCR10/QCR9, UQCR11/QCR10 and a cleavage product of UQCRFS1). This cytochrome bc1 complex then forms a dimer.</text>
</comment>
<comment type="subcellular location">
    <subcellularLocation>
        <location evidence="2">Mitochondrion inner membrane</location>
        <topology evidence="2">Multi-pass membrane protein</topology>
    </subcellularLocation>
</comment>
<comment type="miscellaneous">
    <text evidence="1">Heme 1 (or BL or b562) is low-potential and absorbs at about 562 nm, and heme 2 (or BH or b566) is high-potential and absorbs at about 566 nm.</text>
</comment>
<comment type="similarity">
    <text evidence="3">Belongs to the cytochrome b family.</text>
</comment>
<comment type="caution">
    <text evidence="2">The full-length protein contains only eight transmembrane helices, not nine as predicted by bioinformatics tools.</text>
</comment>
<protein>
    <recommendedName>
        <fullName>Cytochrome b</fullName>
    </recommendedName>
    <alternativeName>
        <fullName>Complex III subunit 3</fullName>
    </alternativeName>
    <alternativeName>
        <fullName>Complex III subunit III</fullName>
    </alternativeName>
    <alternativeName>
        <fullName>Cytochrome b-c1 complex subunit 3</fullName>
    </alternativeName>
    <alternativeName>
        <fullName>Ubiquinol-cytochrome-c reductase complex cytochrome b subunit</fullName>
    </alternativeName>
</protein>